<keyword id="KW-1185">Reference proteome</keyword>
<keyword id="KW-0687">Ribonucleoprotein</keyword>
<keyword id="KW-0689">Ribosomal protein</keyword>
<keyword id="KW-0694">RNA-binding</keyword>
<keyword id="KW-0699">rRNA-binding</keyword>
<name>RL21_SACEN</name>
<dbReference type="EMBL" id="AM420293">
    <property type="protein sequence ID" value="CAM00736.1"/>
    <property type="molecule type" value="Genomic_DNA"/>
</dbReference>
<dbReference type="RefSeq" id="WP_009947750.1">
    <property type="nucleotide sequence ID" value="NC_009142.1"/>
</dbReference>
<dbReference type="SMR" id="A4F9L1"/>
<dbReference type="STRING" id="405948.SACE_1414"/>
<dbReference type="KEGG" id="sen:SACE_1414"/>
<dbReference type="eggNOG" id="COG0261">
    <property type="taxonomic scope" value="Bacteria"/>
</dbReference>
<dbReference type="HOGENOM" id="CLU_061463_3_0_11"/>
<dbReference type="OrthoDB" id="9813334at2"/>
<dbReference type="Proteomes" id="UP000006728">
    <property type="component" value="Chromosome"/>
</dbReference>
<dbReference type="GO" id="GO:0005737">
    <property type="term" value="C:cytoplasm"/>
    <property type="evidence" value="ECO:0007669"/>
    <property type="project" value="UniProtKB-ARBA"/>
</dbReference>
<dbReference type="GO" id="GO:1990904">
    <property type="term" value="C:ribonucleoprotein complex"/>
    <property type="evidence" value="ECO:0007669"/>
    <property type="project" value="UniProtKB-KW"/>
</dbReference>
<dbReference type="GO" id="GO:0005840">
    <property type="term" value="C:ribosome"/>
    <property type="evidence" value="ECO:0007669"/>
    <property type="project" value="UniProtKB-KW"/>
</dbReference>
<dbReference type="GO" id="GO:0019843">
    <property type="term" value="F:rRNA binding"/>
    <property type="evidence" value="ECO:0007669"/>
    <property type="project" value="UniProtKB-UniRule"/>
</dbReference>
<dbReference type="GO" id="GO:0003735">
    <property type="term" value="F:structural constituent of ribosome"/>
    <property type="evidence" value="ECO:0007669"/>
    <property type="project" value="InterPro"/>
</dbReference>
<dbReference type="GO" id="GO:0006412">
    <property type="term" value="P:translation"/>
    <property type="evidence" value="ECO:0007669"/>
    <property type="project" value="UniProtKB-UniRule"/>
</dbReference>
<dbReference type="HAMAP" id="MF_01363">
    <property type="entry name" value="Ribosomal_bL21"/>
    <property type="match status" value="1"/>
</dbReference>
<dbReference type="InterPro" id="IPR028909">
    <property type="entry name" value="bL21-like"/>
</dbReference>
<dbReference type="InterPro" id="IPR036164">
    <property type="entry name" value="bL21-like_sf"/>
</dbReference>
<dbReference type="InterPro" id="IPR001787">
    <property type="entry name" value="Ribosomal_bL21"/>
</dbReference>
<dbReference type="InterPro" id="IPR018258">
    <property type="entry name" value="Ribosomal_bL21_CS"/>
</dbReference>
<dbReference type="NCBIfam" id="TIGR00061">
    <property type="entry name" value="L21"/>
    <property type="match status" value="1"/>
</dbReference>
<dbReference type="PANTHER" id="PTHR21349">
    <property type="entry name" value="50S RIBOSOMAL PROTEIN L21"/>
    <property type="match status" value="1"/>
</dbReference>
<dbReference type="PANTHER" id="PTHR21349:SF0">
    <property type="entry name" value="LARGE RIBOSOMAL SUBUNIT PROTEIN BL21M"/>
    <property type="match status" value="1"/>
</dbReference>
<dbReference type="Pfam" id="PF00829">
    <property type="entry name" value="Ribosomal_L21p"/>
    <property type="match status" value="1"/>
</dbReference>
<dbReference type="SUPFAM" id="SSF141091">
    <property type="entry name" value="L21p-like"/>
    <property type="match status" value="1"/>
</dbReference>
<dbReference type="PROSITE" id="PS01169">
    <property type="entry name" value="RIBOSOMAL_L21"/>
    <property type="match status" value="1"/>
</dbReference>
<feature type="chain" id="PRO_1000067891" description="Large ribosomal subunit protein bL21">
    <location>
        <begin position="1"/>
        <end position="102"/>
    </location>
</feature>
<organism>
    <name type="scientific">Saccharopolyspora erythraea (strain ATCC 11635 / DSM 40517 / JCM 4748 / NBRC 13426 / NCIMB 8594 / NRRL 2338)</name>
    <dbReference type="NCBI Taxonomy" id="405948"/>
    <lineage>
        <taxon>Bacteria</taxon>
        <taxon>Bacillati</taxon>
        <taxon>Actinomycetota</taxon>
        <taxon>Actinomycetes</taxon>
        <taxon>Pseudonocardiales</taxon>
        <taxon>Pseudonocardiaceae</taxon>
        <taxon>Saccharopolyspora</taxon>
    </lineage>
</organism>
<evidence type="ECO:0000255" key="1">
    <source>
        <dbReference type="HAMAP-Rule" id="MF_01363"/>
    </source>
</evidence>
<evidence type="ECO:0000305" key="2"/>
<gene>
    <name evidence="1" type="primary">rplU</name>
    <name type="ordered locus">SACE_1414</name>
</gene>
<protein>
    <recommendedName>
        <fullName evidence="1">Large ribosomal subunit protein bL21</fullName>
    </recommendedName>
    <alternativeName>
        <fullName evidence="2">50S ribosomal protein L21</fullName>
    </alternativeName>
</protein>
<proteinExistence type="inferred from homology"/>
<comment type="function">
    <text evidence="1">This protein binds to 23S rRNA in the presence of protein L20.</text>
</comment>
<comment type="subunit">
    <text evidence="1">Part of the 50S ribosomal subunit. Contacts protein L20.</text>
</comment>
<comment type="similarity">
    <text evidence="1">Belongs to the bacterial ribosomal protein bL21 family.</text>
</comment>
<sequence length="102" mass="11090">MYAIVKTGGKQYKVAVGDVVEVEKLEGEPGSEVTFPALLLVDGSDVTADADALAKVSVTGKLVEQTKGPKIRIHKFKNKTGYHKRQGHRQKLTRVEVTGITK</sequence>
<accession>A4F9L1</accession>
<reference key="1">
    <citation type="journal article" date="2007" name="Nat. Biotechnol.">
        <title>Complete genome sequence of the erythromycin-producing bacterium Saccharopolyspora erythraea NRRL23338.</title>
        <authorList>
            <person name="Oliynyk M."/>
            <person name="Samborskyy M."/>
            <person name="Lester J.B."/>
            <person name="Mironenko T."/>
            <person name="Scott N."/>
            <person name="Dickens S."/>
            <person name="Haydock S.F."/>
            <person name="Leadlay P.F."/>
        </authorList>
    </citation>
    <scope>NUCLEOTIDE SEQUENCE [LARGE SCALE GENOMIC DNA]</scope>
    <source>
        <strain>ATCC 11635 / DSM 40517 / JCM 4748 / NBRC 13426 / NCIMB 8594 / NRRL 2338</strain>
    </source>
</reference>